<feature type="chain" id="PRO_1000212304" description="Glucose-1-phosphate adenylyltransferase">
    <location>
        <begin position="1"/>
        <end position="379"/>
    </location>
</feature>
<feature type="binding site" evidence="1">
    <location>
        <position position="164"/>
    </location>
    <ligand>
        <name>alpha-D-glucose 1-phosphate</name>
        <dbReference type="ChEBI" id="CHEBI:58601"/>
    </ligand>
</feature>
<feature type="binding site" evidence="1">
    <location>
        <begin position="179"/>
        <end position="180"/>
    </location>
    <ligand>
        <name>alpha-D-glucose 1-phosphate</name>
        <dbReference type="ChEBI" id="CHEBI:58601"/>
    </ligand>
</feature>
<feature type="binding site" evidence="1">
    <location>
        <position position="190"/>
    </location>
    <ligand>
        <name>alpha-D-glucose 1-phosphate</name>
        <dbReference type="ChEBI" id="CHEBI:58601"/>
    </ligand>
</feature>
<keyword id="KW-0067">ATP-binding</keyword>
<keyword id="KW-0119">Carbohydrate metabolism</keyword>
<keyword id="KW-0320">Glycogen biosynthesis</keyword>
<keyword id="KW-0321">Glycogen metabolism</keyword>
<keyword id="KW-0547">Nucleotide-binding</keyword>
<keyword id="KW-0548">Nucleotidyltransferase</keyword>
<keyword id="KW-0808">Transferase</keyword>
<protein>
    <recommendedName>
        <fullName evidence="1">Glucose-1-phosphate adenylyltransferase</fullName>
        <ecNumber evidence="1">2.7.7.27</ecNumber>
    </recommendedName>
    <alternativeName>
        <fullName evidence="1">ADP-glucose pyrophosphorylase</fullName>
        <shortName evidence="1">ADPGlc PPase</shortName>
    </alternativeName>
    <alternativeName>
        <fullName evidence="1">ADP-glucose synthase</fullName>
    </alternativeName>
</protein>
<comment type="function">
    <text evidence="1">Involved in the biosynthesis of ADP-glucose, a building block required for the elongation reactions to produce glycogen. Catalyzes the reaction between ATP and alpha-D-glucose 1-phosphate (G1P) to produce pyrophosphate and ADP-Glc.</text>
</comment>
<comment type="catalytic activity">
    <reaction evidence="1">
        <text>alpha-D-glucose 1-phosphate + ATP + H(+) = ADP-alpha-D-glucose + diphosphate</text>
        <dbReference type="Rhea" id="RHEA:12120"/>
        <dbReference type="ChEBI" id="CHEBI:15378"/>
        <dbReference type="ChEBI" id="CHEBI:30616"/>
        <dbReference type="ChEBI" id="CHEBI:33019"/>
        <dbReference type="ChEBI" id="CHEBI:57498"/>
        <dbReference type="ChEBI" id="CHEBI:58601"/>
        <dbReference type="EC" id="2.7.7.27"/>
    </reaction>
</comment>
<comment type="pathway">
    <text evidence="1">Glycan biosynthesis; glycogen biosynthesis.</text>
</comment>
<comment type="subunit">
    <text evidence="1">Homotetramer.</text>
</comment>
<comment type="similarity">
    <text evidence="1">Belongs to the bacterial/plant glucose-1-phosphate adenylyltransferase family.</text>
</comment>
<evidence type="ECO:0000255" key="1">
    <source>
        <dbReference type="HAMAP-Rule" id="MF_00624"/>
    </source>
</evidence>
<proteinExistence type="inferred from homology"/>
<name>GLGC_STRS7</name>
<organism>
    <name type="scientific">Streptococcus equi subsp. zooepidemicus (strain H70)</name>
    <dbReference type="NCBI Taxonomy" id="553483"/>
    <lineage>
        <taxon>Bacteria</taxon>
        <taxon>Bacillati</taxon>
        <taxon>Bacillota</taxon>
        <taxon>Bacilli</taxon>
        <taxon>Lactobacillales</taxon>
        <taxon>Streptococcaceae</taxon>
        <taxon>Streptococcus</taxon>
    </lineage>
</organism>
<reference key="1">
    <citation type="journal article" date="2009" name="PLoS Pathog.">
        <title>Genomic evidence for the evolution of Streptococcus equi: host restriction, increased virulence, and genetic exchange with human pathogens.</title>
        <authorList>
            <person name="Holden M.T.G."/>
            <person name="Heather Z."/>
            <person name="Paillot R."/>
            <person name="Steward K.F."/>
            <person name="Webb K."/>
            <person name="Ainslie F."/>
            <person name="Jourdan T."/>
            <person name="Bason N.C."/>
            <person name="Holroyd N.E."/>
            <person name="Mungall K."/>
            <person name="Quail M.A."/>
            <person name="Sanders M."/>
            <person name="Simmonds M."/>
            <person name="Willey D."/>
            <person name="Brooks K."/>
            <person name="Aanensen D.M."/>
            <person name="Spratt B.G."/>
            <person name="Jolley K.A."/>
            <person name="Maiden M.C.J."/>
            <person name="Kehoe M."/>
            <person name="Chanter N."/>
            <person name="Bentley S.D."/>
            <person name="Robinson C."/>
            <person name="Maskell D.J."/>
            <person name="Parkhill J."/>
            <person name="Waller A.S."/>
        </authorList>
    </citation>
    <scope>NUCLEOTIDE SEQUENCE [LARGE SCALE GENOMIC DNA]</scope>
    <source>
        <strain>H70</strain>
    </source>
</reference>
<gene>
    <name evidence="1" type="primary">glgC</name>
    <name type="ordered locus">SZO_11730</name>
</gene>
<accession>C0MH79</accession>
<sequence length="379" mass="41825">MKNGMLALILAGGQGTRLGKLTQSIAKPAVQFGGRYRIIDFALSNCANSGIHNVGVITQYQPLALNNHIGNGSSWGLDGINSGATILQPYSATEGNRWFQGTSHAIYQNIDYIDSINPEYVLILSGDHIYKMDYDDMLQTHKANMASLTVAVIDVPLKEAGRFGIMNTDTNDRIVEFEEKPANPKSTKASMGIYIFNWQRLRTMLVDAEKNNIDMSDFGQHVIPSYLESGERVYTYNFKGYWKDVGTIESLWEANMEYIGEENALDSRDRSWKIYSKNHIAPPNFITEDAEVKDSLVVDGSFISGKVNHSILSTNVQVRKGAEVKDSFIMSDVIIGEGARITRAIIGEGAVIGDHVVIDGSKDVQVVGYNEVVGVPNED</sequence>
<dbReference type="EC" id="2.7.7.27" evidence="1"/>
<dbReference type="EMBL" id="FM204884">
    <property type="protein sequence ID" value="CAW99619.1"/>
    <property type="molecule type" value="Genomic_DNA"/>
</dbReference>
<dbReference type="SMR" id="C0MH79"/>
<dbReference type="KEGG" id="seq:SZO_11730"/>
<dbReference type="eggNOG" id="COG0448">
    <property type="taxonomic scope" value="Bacteria"/>
</dbReference>
<dbReference type="HOGENOM" id="CLU_029499_14_0_9"/>
<dbReference type="UniPathway" id="UPA00164"/>
<dbReference type="Proteomes" id="UP000001368">
    <property type="component" value="Chromosome"/>
</dbReference>
<dbReference type="GO" id="GO:0005524">
    <property type="term" value="F:ATP binding"/>
    <property type="evidence" value="ECO:0007669"/>
    <property type="project" value="UniProtKB-KW"/>
</dbReference>
<dbReference type="GO" id="GO:0008878">
    <property type="term" value="F:glucose-1-phosphate adenylyltransferase activity"/>
    <property type="evidence" value="ECO:0007669"/>
    <property type="project" value="UniProtKB-UniRule"/>
</dbReference>
<dbReference type="GO" id="GO:0005978">
    <property type="term" value="P:glycogen biosynthetic process"/>
    <property type="evidence" value="ECO:0007669"/>
    <property type="project" value="UniProtKB-UniRule"/>
</dbReference>
<dbReference type="CDD" id="cd02508">
    <property type="entry name" value="ADP_Glucose_PP"/>
    <property type="match status" value="1"/>
</dbReference>
<dbReference type="CDD" id="cd04651">
    <property type="entry name" value="LbH_G1P_AT_C"/>
    <property type="match status" value="1"/>
</dbReference>
<dbReference type="Gene3D" id="2.160.10.10">
    <property type="entry name" value="Hexapeptide repeat proteins"/>
    <property type="match status" value="1"/>
</dbReference>
<dbReference type="Gene3D" id="3.90.550.10">
    <property type="entry name" value="Spore Coat Polysaccharide Biosynthesis Protein SpsA, Chain A"/>
    <property type="match status" value="1"/>
</dbReference>
<dbReference type="HAMAP" id="MF_00624">
    <property type="entry name" value="GlgC"/>
    <property type="match status" value="1"/>
</dbReference>
<dbReference type="InterPro" id="IPR011831">
    <property type="entry name" value="ADP-Glc_PPase"/>
</dbReference>
<dbReference type="InterPro" id="IPR005836">
    <property type="entry name" value="ADP_Glu_pyroP_CS"/>
</dbReference>
<dbReference type="InterPro" id="IPR023049">
    <property type="entry name" value="GlgC_bac"/>
</dbReference>
<dbReference type="InterPro" id="IPR056818">
    <property type="entry name" value="GlmU/GlgC-like_hexapep"/>
</dbReference>
<dbReference type="InterPro" id="IPR005835">
    <property type="entry name" value="NTP_transferase_dom"/>
</dbReference>
<dbReference type="InterPro" id="IPR029044">
    <property type="entry name" value="Nucleotide-diphossugar_trans"/>
</dbReference>
<dbReference type="InterPro" id="IPR011004">
    <property type="entry name" value="Trimer_LpxA-like_sf"/>
</dbReference>
<dbReference type="NCBIfam" id="TIGR02091">
    <property type="entry name" value="glgC"/>
    <property type="match status" value="1"/>
</dbReference>
<dbReference type="NCBIfam" id="NF003670">
    <property type="entry name" value="PRK05293.1"/>
    <property type="match status" value="1"/>
</dbReference>
<dbReference type="PANTHER" id="PTHR43523:SF2">
    <property type="entry name" value="GLUCOSE-1-PHOSPHATE ADENYLYLTRANSFERASE"/>
    <property type="match status" value="1"/>
</dbReference>
<dbReference type="PANTHER" id="PTHR43523">
    <property type="entry name" value="GLUCOSE-1-PHOSPHATE ADENYLYLTRANSFERASE-RELATED"/>
    <property type="match status" value="1"/>
</dbReference>
<dbReference type="Pfam" id="PF24894">
    <property type="entry name" value="Hexapep_GlmU"/>
    <property type="match status" value="1"/>
</dbReference>
<dbReference type="Pfam" id="PF00483">
    <property type="entry name" value="NTP_transferase"/>
    <property type="match status" value="1"/>
</dbReference>
<dbReference type="SUPFAM" id="SSF53448">
    <property type="entry name" value="Nucleotide-diphospho-sugar transferases"/>
    <property type="match status" value="1"/>
</dbReference>
<dbReference type="SUPFAM" id="SSF51161">
    <property type="entry name" value="Trimeric LpxA-like enzymes"/>
    <property type="match status" value="1"/>
</dbReference>
<dbReference type="PROSITE" id="PS00808">
    <property type="entry name" value="ADP_GLC_PYROPHOSPH_1"/>
    <property type="match status" value="1"/>
</dbReference>
<dbReference type="PROSITE" id="PS00809">
    <property type="entry name" value="ADP_GLC_PYROPHOSPH_2"/>
    <property type="match status" value="1"/>
</dbReference>
<dbReference type="PROSITE" id="PS00810">
    <property type="entry name" value="ADP_GLC_PYROPHOSPH_3"/>
    <property type="match status" value="1"/>
</dbReference>